<protein>
    <recommendedName>
        <fullName>Aquaporin-like protein 2</fullName>
    </recommendedName>
    <alternativeName>
        <fullName>Truncated aquaporin-2</fullName>
    </alternativeName>
</protein>
<reference key="1">
    <citation type="journal article" date="2009" name="Genome Res.">
        <title>Genome structure of a Saccharomyces cerevisiae strain widely used in bioethanol production.</title>
        <authorList>
            <person name="Argueso J.L."/>
            <person name="Carazzolle M.F."/>
            <person name="Mieczkowski P.A."/>
            <person name="Duarte F.M."/>
            <person name="Netto O.V.C."/>
            <person name="Missawa S.K."/>
            <person name="Galzerani F."/>
            <person name="Costa G.G.L."/>
            <person name="Vidal R.O."/>
            <person name="Noronha M.F."/>
            <person name="Dominska M."/>
            <person name="Andrietta M.G.S."/>
            <person name="Andrietta S.R."/>
            <person name="Cunha A.F."/>
            <person name="Gomes L.H."/>
            <person name="Tavares F.C.A."/>
            <person name="Alcarde A.R."/>
            <person name="Dietrich F.S."/>
            <person name="McCusker J.H."/>
            <person name="Petes T.D."/>
            <person name="Pereira G.A.G."/>
        </authorList>
    </citation>
    <scope>NUCLEOTIDE SEQUENCE [LARGE SCALE GENOMIC DNA]</scope>
    <source>
        <strain>JAY291</strain>
    </source>
</reference>
<dbReference type="EMBL" id="ACFL01000073">
    <property type="protein sequence ID" value="EEU07683.1"/>
    <property type="molecule type" value="Genomic_DNA"/>
</dbReference>
<dbReference type="SMR" id="C7GNE3"/>
<dbReference type="Proteomes" id="UP000008073">
    <property type="component" value="Unassembled WGS sequence"/>
</dbReference>
<dbReference type="GO" id="GO:0005789">
    <property type="term" value="C:endoplasmic reticulum membrane"/>
    <property type="evidence" value="ECO:0007669"/>
    <property type="project" value="UniProtKB-SubCell"/>
</dbReference>
<dbReference type="GO" id="GO:0005886">
    <property type="term" value="C:plasma membrane"/>
    <property type="evidence" value="ECO:0007669"/>
    <property type="project" value="UniProtKB-SubCell"/>
</dbReference>
<dbReference type="FunFam" id="1.20.1080.10:FF:000049">
    <property type="entry name" value="Aquaporin-like protein 2"/>
    <property type="match status" value="1"/>
</dbReference>
<dbReference type="Gene3D" id="1.20.1080.10">
    <property type="entry name" value="Glycerol uptake facilitator protein"/>
    <property type="match status" value="1"/>
</dbReference>
<dbReference type="InterPro" id="IPR023271">
    <property type="entry name" value="Aquaporin-like"/>
</dbReference>
<dbReference type="SUPFAM" id="SSF81338">
    <property type="entry name" value="Aquaporin-like"/>
    <property type="match status" value="1"/>
</dbReference>
<gene>
    <name type="primary">AQY2-2</name>
    <name type="ORF">C1Q_01794</name>
</gene>
<proteinExistence type="inferred from homology"/>
<sequence length="149" mass="17024">MSNESNDLEKNISHLDPTGVDNAYIPPEQPETKHSRFNIDRDTLRNHFIAAVGEFCGTFMFLWCAYVICNVANHDVALTTEPEGSHPGQLIMIALGFGFSVMFSIWCFWWGFEPSRFSLFVFGQSHLTSQMCSDVVSSDHCWDGCWWCR</sequence>
<keyword id="KW-1003">Cell membrane</keyword>
<keyword id="KW-0256">Endoplasmic reticulum</keyword>
<keyword id="KW-0472">Membrane</keyword>
<keyword id="KW-0677">Repeat</keyword>
<keyword id="KW-0812">Transmembrane</keyword>
<keyword id="KW-1133">Transmembrane helix</keyword>
<keyword id="KW-0813">Transport</keyword>
<organism>
    <name type="scientific">Saccharomyces cerevisiae (strain JAY291)</name>
    <name type="common">Baker's yeast</name>
    <dbReference type="NCBI Taxonomy" id="574961"/>
    <lineage>
        <taxon>Eukaryota</taxon>
        <taxon>Fungi</taxon>
        <taxon>Dikarya</taxon>
        <taxon>Ascomycota</taxon>
        <taxon>Saccharomycotina</taxon>
        <taxon>Saccharomycetes</taxon>
        <taxon>Saccharomycetales</taxon>
        <taxon>Saccharomycetaceae</taxon>
        <taxon>Saccharomyces</taxon>
    </lineage>
</organism>
<feature type="chain" id="PRO_0000391653" description="Aquaporin-like protein 2">
    <location>
        <begin position="1"/>
        <end position="149"/>
    </location>
</feature>
<feature type="topological domain" description="Cytoplasmic" evidence="1">
    <location>
        <begin position="1"/>
        <end position="47"/>
    </location>
</feature>
<feature type="transmembrane region" description="Helical" evidence="2">
    <location>
        <begin position="48"/>
        <end position="68"/>
    </location>
</feature>
<feature type="topological domain" description="Extracellular" evidence="1">
    <location>
        <begin position="69"/>
        <end position="89"/>
    </location>
</feature>
<feature type="transmembrane region" description="Helical" evidence="2">
    <location>
        <begin position="90"/>
        <end position="110"/>
    </location>
</feature>
<feature type="topological domain" description="Cytoplasmic" evidence="1">
    <location>
        <begin position="111"/>
        <end position="149"/>
    </location>
</feature>
<feature type="region of interest" description="Disordered" evidence="3">
    <location>
        <begin position="1"/>
        <end position="35"/>
    </location>
</feature>
<accession>C7GNE3</accession>
<comment type="function">
    <text evidence="1">Water channel required to facilitate the transport of water across membranes. Involved in freeze tolerance, osmotolerance and cell flocculation in liquid cultures. Is non-functional in most laboratory strains (By similarity).</text>
</comment>
<comment type="subcellular location">
    <subcellularLocation>
        <location evidence="1">Endoplasmic reticulum membrane</location>
        <topology>Multi-pass membrane protein</topology>
    </subcellularLocation>
    <subcellularLocation>
        <location evidence="1">Cell membrane</location>
        <topology>Multi-pass membrane protein</topology>
    </subcellularLocation>
</comment>
<comment type="induction">
    <text evidence="1">During exponential phase in rich medium and repressed in minimum medium, hyper-osmolar medium or in sporulating conditions.</text>
</comment>
<comment type="domain">
    <text>Aquaporins contain two tandem repeats each containing three membrane-spanning domains and a pore-forming loop with the signature motif Asn-Pro-Ala (NPA).</text>
</comment>
<comment type="similarity">
    <text evidence="4">Belongs to the MIP/aquaporin (TC 1.A.8) family.</text>
</comment>
<comment type="caution">
    <text evidence="4">This is a truncated version of aquaporin-2. A natural 11 bp deletion in position 109 leads to a frameshift, which disrupts the gene coding for this protein and produces two ORFs C1Q_01794 and C1Q_01798. A contiguous sequence for aquaporin-2 can be found in strain Sigma 1278B (AC P0CD89).</text>
</comment>
<evidence type="ECO:0000250" key="1"/>
<evidence type="ECO:0000255" key="2"/>
<evidence type="ECO:0000256" key="3">
    <source>
        <dbReference type="SAM" id="MobiDB-lite"/>
    </source>
</evidence>
<evidence type="ECO:0000305" key="4"/>
<name>AQY22_YEAS2</name>